<accession>Q61806</accession>
<accession>Q61244</accession>
<keyword id="KW-0175">Coiled coil</keyword>
<keyword id="KW-1185">Reference proteome</keyword>
<comment type="tissue specificity">
    <text>Expressed in lymphoid cells.</text>
</comment>
<comment type="similarity">
    <text evidence="3">Belongs to the XLR/SYCP3 family.</text>
</comment>
<sequence>MSSRKRKATDTAGRHSRMDPNLSSDDSQNPGAVAAANREVLDAGREDIISSGTERQQARKEKQDLVQEFEEPRNKVLQENREKFSRIMTSSFSAMEVKIKDVLKTHCEERQKLCQDYSLQFTNLNRKLTSDAYKLKKHAETLSNMFMEQQKFIHESLTLQKNRMEEFKSLCEKYLEKLEVLRDSRGNSIAEELRRLIATLEIKLLMLHNQQKTAAPPQSLLDVLFS</sequence>
<protein>
    <recommendedName>
        <fullName>X-linked lymphocyte-regulated protein 3C</fullName>
    </recommendedName>
    <alternativeName>
        <fullName>XLR-related protein A12</fullName>
    </alternativeName>
</protein>
<reference key="1">
    <citation type="journal article" date="1994" name="Gene">
        <title>Sequence and expression of murine cDNAs encoding Xlr3a and Xlr3b, defining a new X-linked lymphocyte-regulated Xlr gene subfamily.</title>
        <authorList>
            <person name="Bergsagel P.L."/>
            <person name="Timblin C.R."/>
            <person name="Kozak C.A."/>
            <person name="Kuehl W.M."/>
        </authorList>
    </citation>
    <scope>NUCLEOTIDE SEQUENCE [MRNA]</scope>
    <source>
        <strain>BALB/cJ</strain>
    </source>
</reference>
<reference key="2">
    <citation type="submission" date="1993-09" db="EMBL/GenBank/DDBJ databases">
        <authorList>
            <person name="Miller I.J."/>
            <person name="Bieker J.J."/>
        </authorList>
    </citation>
    <scope>NUCLEOTIDE SEQUENCE [MRNA]</scope>
</reference>
<evidence type="ECO:0000255" key="1"/>
<evidence type="ECO:0000256" key="2">
    <source>
        <dbReference type="SAM" id="MobiDB-lite"/>
    </source>
</evidence>
<evidence type="ECO:0000305" key="3"/>
<feature type="chain" id="PRO_0000223042" description="X-linked lymphocyte-regulated protein 3C">
    <location>
        <begin position="1"/>
        <end position="226"/>
    </location>
</feature>
<feature type="region of interest" description="Disordered" evidence="2">
    <location>
        <begin position="1"/>
        <end position="66"/>
    </location>
</feature>
<feature type="coiled-coil region" evidence="1">
    <location>
        <begin position="155"/>
        <end position="210"/>
    </location>
</feature>
<feature type="compositionally biased region" description="Basic and acidic residues" evidence="2">
    <location>
        <begin position="8"/>
        <end position="18"/>
    </location>
</feature>
<feature type="compositionally biased region" description="Polar residues" evidence="2">
    <location>
        <begin position="21"/>
        <end position="30"/>
    </location>
</feature>
<feature type="compositionally biased region" description="Basic and acidic residues" evidence="2">
    <location>
        <begin position="39"/>
        <end position="48"/>
    </location>
</feature>
<feature type="compositionally biased region" description="Basic and acidic residues" evidence="2">
    <location>
        <begin position="56"/>
        <end position="66"/>
    </location>
</feature>
<feature type="sequence conflict" description="In Ref. 2; AAA37127." evidence="3" ref="2">
    <original>E</original>
    <variation>K</variation>
    <location>
        <position position="82"/>
    </location>
</feature>
<feature type="sequence conflict" description="In Ref. 2; AAA37127." evidence="3" ref="2">
    <original>E</original>
    <variation>K</variation>
    <location>
        <position position="165"/>
    </location>
</feature>
<organism>
    <name type="scientific">Mus musculus</name>
    <name type="common">Mouse</name>
    <dbReference type="NCBI Taxonomy" id="10090"/>
    <lineage>
        <taxon>Eukaryota</taxon>
        <taxon>Metazoa</taxon>
        <taxon>Chordata</taxon>
        <taxon>Craniata</taxon>
        <taxon>Vertebrata</taxon>
        <taxon>Euteleostomi</taxon>
        <taxon>Mammalia</taxon>
        <taxon>Eutheria</taxon>
        <taxon>Euarchontoglires</taxon>
        <taxon>Glires</taxon>
        <taxon>Rodentia</taxon>
        <taxon>Myomorpha</taxon>
        <taxon>Muroidea</taxon>
        <taxon>Muridae</taxon>
        <taxon>Murinae</taxon>
        <taxon>Mus</taxon>
        <taxon>Mus</taxon>
    </lineage>
</organism>
<name>XL3C_MOUSE</name>
<dbReference type="EMBL" id="U02600">
    <property type="protein sequence ID" value="AAA82107.1"/>
    <property type="molecule type" value="mRNA"/>
</dbReference>
<dbReference type="EMBL" id="L22977">
    <property type="protein sequence ID" value="AAA37127.1"/>
    <property type="molecule type" value="mRNA"/>
</dbReference>
<dbReference type="CCDS" id="CCDS30197.1"/>
<dbReference type="PIR" id="I49392">
    <property type="entry name" value="I49392"/>
</dbReference>
<dbReference type="SMR" id="Q61806"/>
<dbReference type="FunCoup" id="Q61806">
    <property type="interactions" value="39"/>
</dbReference>
<dbReference type="STRING" id="10090.ENSMUSP00000079651"/>
<dbReference type="PaxDb" id="10090-ENSMUSP00000079651"/>
<dbReference type="AGR" id="MGI:3047103"/>
<dbReference type="MGI" id="MGI:3047103">
    <property type="gene designation" value="Xlr3c"/>
</dbReference>
<dbReference type="InParanoid" id="Q61806"/>
<dbReference type="PhylomeDB" id="Q61806"/>
<dbReference type="PRO" id="PR:Q61806"/>
<dbReference type="Proteomes" id="UP000000589">
    <property type="component" value="Unplaced"/>
</dbReference>
<dbReference type="RNAct" id="Q61806">
    <property type="molecule type" value="protein"/>
</dbReference>
<dbReference type="InterPro" id="IPR051443">
    <property type="entry name" value="XLR/SYCP3"/>
</dbReference>
<dbReference type="InterPro" id="IPR006888">
    <property type="entry name" value="XLR/SYCP3/FAM9_dom"/>
</dbReference>
<dbReference type="PANTHER" id="PTHR19368:SF3">
    <property type="entry name" value="X-LINKED LYMPHOCYTE-REGULATED PROTEIN 3A-RELATED"/>
    <property type="match status" value="1"/>
</dbReference>
<dbReference type="PANTHER" id="PTHR19368">
    <property type="entry name" value="XLR/SCP3/FAM9"/>
    <property type="match status" value="1"/>
</dbReference>
<dbReference type="Pfam" id="PF04803">
    <property type="entry name" value="Cor1"/>
    <property type="match status" value="1"/>
</dbReference>
<gene>
    <name type="primary">Xlr3c</name>
    <name type="synonym">Xlr3b</name>
</gene>
<proteinExistence type="evidence at transcript level"/>